<protein>
    <recommendedName>
        <fullName evidence="1">Phosphoribosyl isomerase A</fullName>
    </recommendedName>
    <alternativeName>
        <fullName evidence="1">1-(5-phosphoribosyl)-5-[(5-phosphoribosylamino)methylideneamino] imidazole-4-carboxamide isomerase</fullName>
        <ecNumber evidence="1">5.3.1.16</ecNumber>
    </alternativeName>
    <alternativeName>
        <fullName evidence="1">N-(5'-phosphoribosyl)anthranilate isomerase</fullName>
        <shortName evidence="1">PRAI</shortName>
        <ecNumber evidence="1">5.3.1.24</ecNumber>
    </alternativeName>
    <alternativeName>
        <fullName evidence="1">Phosphoribosylformimino-5-aminoimidazole carboxamide ribotide isomerase</fullName>
    </alternativeName>
</protein>
<dbReference type="EC" id="5.3.1.16" evidence="1"/>
<dbReference type="EC" id="5.3.1.24" evidence="1"/>
<dbReference type="EMBL" id="CP000325">
    <property type="protein sequence ID" value="ABL04087.1"/>
    <property type="molecule type" value="Genomic_DNA"/>
</dbReference>
<dbReference type="RefSeq" id="WP_011739707.1">
    <property type="nucleotide sequence ID" value="NC_008611.1"/>
</dbReference>
<dbReference type="SMR" id="A0PP18"/>
<dbReference type="KEGG" id="mul:MUL_1576"/>
<dbReference type="eggNOG" id="COG0106">
    <property type="taxonomic scope" value="Bacteria"/>
</dbReference>
<dbReference type="HOGENOM" id="CLU_048577_1_1_11"/>
<dbReference type="UniPathway" id="UPA00031">
    <property type="reaction ID" value="UER00009"/>
</dbReference>
<dbReference type="UniPathway" id="UPA00035">
    <property type="reaction ID" value="UER00042"/>
</dbReference>
<dbReference type="Proteomes" id="UP000000765">
    <property type="component" value="Chromosome"/>
</dbReference>
<dbReference type="GO" id="GO:0005737">
    <property type="term" value="C:cytoplasm"/>
    <property type="evidence" value="ECO:0007669"/>
    <property type="project" value="UniProtKB-SubCell"/>
</dbReference>
<dbReference type="GO" id="GO:0003949">
    <property type="term" value="F:1-(5-phosphoribosyl)-5-[(5-phosphoribosylamino)methylideneamino]imidazole-4-carboxamide isomerase activity"/>
    <property type="evidence" value="ECO:0007669"/>
    <property type="project" value="UniProtKB-UniRule"/>
</dbReference>
<dbReference type="GO" id="GO:0004640">
    <property type="term" value="F:phosphoribosylanthranilate isomerase activity"/>
    <property type="evidence" value="ECO:0007669"/>
    <property type="project" value="UniProtKB-UniRule"/>
</dbReference>
<dbReference type="GO" id="GO:0000105">
    <property type="term" value="P:L-histidine biosynthetic process"/>
    <property type="evidence" value="ECO:0007669"/>
    <property type="project" value="UniProtKB-UniRule"/>
</dbReference>
<dbReference type="GO" id="GO:0000162">
    <property type="term" value="P:L-tryptophan biosynthetic process"/>
    <property type="evidence" value="ECO:0007669"/>
    <property type="project" value="UniProtKB-UniRule"/>
</dbReference>
<dbReference type="CDD" id="cd04732">
    <property type="entry name" value="HisA"/>
    <property type="match status" value="1"/>
</dbReference>
<dbReference type="FunFam" id="3.20.20.70:FF:000009">
    <property type="entry name" value="1-(5-phosphoribosyl)-5-[(5-phosphoribosylamino)methylideneamino] imidazole-4-carboxamide isomerase"/>
    <property type="match status" value="1"/>
</dbReference>
<dbReference type="Gene3D" id="3.20.20.70">
    <property type="entry name" value="Aldolase class I"/>
    <property type="match status" value="1"/>
</dbReference>
<dbReference type="HAMAP" id="MF_01014">
    <property type="entry name" value="HisA"/>
    <property type="match status" value="1"/>
</dbReference>
<dbReference type="InterPro" id="IPR013785">
    <property type="entry name" value="Aldolase_TIM"/>
</dbReference>
<dbReference type="InterPro" id="IPR006062">
    <property type="entry name" value="His_biosynth"/>
</dbReference>
<dbReference type="InterPro" id="IPR010188">
    <property type="entry name" value="HisA/PriA_Actinobacteria"/>
</dbReference>
<dbReference type="InterPro" id="IPR044524">
    <property type="entry name" value="Isoase_HisA-like"/>
</dbReference>
<dbReference type="InterPro" id="IPR023016">
    <property type="entry name" value="Isoase_HisA-like_bact"/>
</dbReference>
<dbReference type="InterPro" id="IPR011060">
    <property type="entry name" value="RibuloseP-bd_barrel"/>
</dbReference>
<dbReference type="NCBIfam" id="TIGR01919">
    <property type="entry name" value="hisA-trpF"/>
    <property type="match status" value="1"/>
</dbReference>
<dbReference type="PANTHER" id="PTHR43090">
    <property type="entry name" value="1-(5-PHOSPHORIBOSYL)-5-[(5-PHOSPHORIBOSYLAMINO)METHYLIDENEAMINO] IMIDAZOLE-4-CARBOXAMIDE ISOMERASE"/>
    <property type="match status" value="1"/>
</dbReference>
<dbReference type="PANTHER" id="PTHR43090:SF2">
    <property type="entry name" value="1-(5-PHOSPHORIBOSYL)-5-[(5-PHOSPHORIBOSYLAMINO)METHYLIDENEAMINO] IMIDAZOLE-4-CARBOXAMIDE ISOMERASE"/>
    <property type="match status" value="1"/>
</dbReference>
<dbReference type="Pfam" id="PF00977">
    <property type="entry name" value="His_biosynth"/>
    <property type="match status" value="1"/>
</dbReference>
<dbReference type="SUPFAM" id="SSF51366">
    <property type="entry name" value="Ribulose-phoshate binding barrel"/>
    <property type="match status" value="1"/>
</dbReference>
<proteinExistence type="inferred from homology"/>
<gene>
    <name evidence="1" type="primary">priA</name>
    <name evidence="1" type="synonym">hisA</name>
    <name type="ordered locus">MUL_1576</name>
</gene>
<comment type="function">
    <text evidence="1">Involved in both the histidine and tryptophan biosynthetic pathways.</text>
</comment>
<comment type="catalytic activity">
    <reaction evidence="1">
        <text>1-(5-phospho-beta-D-ribosyl)-5-[(5-phospho-beta-D-ribosylamino)methylideneamino]imidazole-4-carboxamide = 5-[(5-phospho-1-deoxy-D-ribulos-1-ylimino)methylamino]-1-(5-phospho-beta-D-ribosyl)imidazole-4-carboxamide</text>
        <dbReference type="Rhea" id="RHEA:15469"/>
        <dbReference type="ChEBI" id="CHEBI:58435"/>
        <dbReference type="ChEBI" id="CHEBI:58525"/>
        <dbReference type="EC" id="5.3.1.16"/>
    </reaction>
</comment>
<comment type="catalytic activity">
    <reaction evidence="1">
        <text>N-(5-phospho-beta-D-ribosyl)anthranilate = 1-(2-carboxyphenylamino)-1-deoxy-D-ribulose 5-phosphate</text>
        <dbReference type="Rhea" id="RHEA:21540"/>
        <dbReference type="ChEBI" id="CHEBI:18277"/>
        <dbReference type="ChEBI" id="CHEBI:58613"/>
        <dbReference type="EC" id="5.3.1.24"/>
    </reaction>
</comment>
<comment type="pathway">
    <text evidence="1">Amino-acid biosynthesis; L-histidine biosynthesis; L-histidine from 5-phospho-alpha-D-ribose 1-diphosphate: step 4/9.</text>
</comment>
<comment type="pathway">
    <text evidence="1">Amino-acid biosynthesis; L-tryptophan biosynthesis; L-tryptophan from chorismate: step 3/5.</text>
</comment>
<comment type="subcellular location">
    <subcellularLocation>
        <location evidence="1">Cytoplasm</location>
    </subcellularLocation>
</comment>
<comment type="similarity">
    <text evidence="1">Belongs to the HisA/HisF family.</text>
</comment>
<reference key="1">
    <citation type="journal article" date="2007" name="Genome Res.">
        <title>Reductive evolution and niche adaptation inferred from the genome of Mycobacterium ulcerans, the causative agent of Buruli ulcer.</title>
        <authorList>
            <person name="Stinear T.P."/>
            <person name="Seemann T."/>
            <person name="Pidot S."/>
            <person name="Frigui W."/>
            <person name="Reysset G."/>
            <person name="Garnier T."/>
            <person name="Meurice G."/>
            <person name="Simon D."/>
            <person name="Bouchier C."/>
            <person name="Ma L."/>
            <person name="Tichit M."/>
            <person name="Porter J.L."/>
            <person name="Ryan J."/>
            <person name="Johnson P.D.R."/>
            <person name="Davies J.K."/>
            <person name="Jenkin G.A."/>
            <person name="Small P.L.C."/>
            <person name="Jones L.M."/>
            <person name="Tekaia F."/>
            <person name="Laval F."/>
            <person name="Daffe M."/>
            <person name="Parkhill J."/>
            <person name="Cole S.T."/>
        </authorList>
    </citation>
    <scope>NUCLEOTIDE SEQUENCE [LARGE SCALE GENOMIC DNA]</scope>
    <source>
        <strain>Agy99</strain>
    </source>
</reference>
<accession>A0PP18</accession>
<sequence length="244" mass="25432">MPLILLPAVDVVEGRAVRLVQGKAGSETEYGSALDAALGWQRDGAEWIHLVDLDAAFGRGSNRELLAEVVGKLDVAVELSGGIRDDDSLAAALATGCARVNLGTAALENPQWCARMIAEHGEKVAVGLDVQIVGGKHRLRGRGWETDGGDLWEVLQRLDSEGCSRYVVTDVTKDGTLAGPNLELLAGVAGRTEAPVIASGGVSSLDDLRAIATLTGQGVEGAIVGKALYAGRFTLPQALTAVRE</sequence>
<organism>
    <name type="scientific">Mycobacterium ulcerans (strain Agy99)</name>
    <dbReference type="NCBI Taxonomy" id="362242"/>
    <lineage>
        <taxon>Bacteria</taxon>
        <taxon>Bacillati</taxon>
        <taxon>Actinomycetota</taxon>
        <taxon>Actinomycetes</taxon>
        <taxon>Mycobacteriales</taxon>
        <taxon>Mycobacteriaceae</taxon>
        <taxon>Mycobacterium</taxon>
        <taxon>Mycobacterium ulcerans group</taxon>
    </lineage>
</organism>
<evidence type="ECO:0000255" key="1">
    <source>
        <dbReference type="HAMAP-Rule" id="MF_01014"/>
    </source>
</evidence>
<keyword id="KW-0028">Amino-acid biosynthesis</keyword>
<keyword id="KW-0057">Aromatic amino acid biosynthesis</keyword>
<keyword id="KW-0963">Cytoplasm</keyword>
<keyword id="KW-0368">Histidine biosynthesis</keyword>
<keyword id="KW-0413">Isomerase</keyword>
<keyword id="KW-0822">Tryptophan biosynthesis</keyword>
<name>HIS4_MYCUA</name>
<feature type="chain" id="PRO_0000290569" description="Phosphoribosyl isomerase A">
    <location>
        <begin position="1"/>
        <end position="244"/>
    </location>
</feature>
<feature type="active site" description="Proton acceptor" evidence="1">
    <location>
        <position position="10"/>
    </location>
</feature>
<feature type="active site" description="Proton donor" evidence="1">
    <location>
        <position position="129"/>
    </location>
</feature>